<dbReference type="EC" id="4.1.99.22" evidence="1"/>
<dbReference type="EMBL" id="AE000516">
    <property type="protein sequence ID" value="AAK45133.1"/>
    <property type="molecule type" value="Genomic_DNA"/>
</dbReference>
<dbReference type="PIR" id="E70816">
    <property type="entry name" value="E70816"/>
</dbReference>
<dbReference type="SMR" id="P9WJS0"/>
<dbReference type="KEGG" id="mtc:MT0892"/>
<dbReference type="PATRIC" id="fig|83331.31.peg.957"/>
<dbReference type="HOGENOM" id="CLU_009273_0_1_11"/>
<dbReference type="UniPathway" id="UPA00344"/>
<dbReference type="Proteomes" id="UP000001020">
    <property type="component" value="Chromosome"/>
</dbReference>
<dbReference type="GO" id="GO:0051539">
    <property type="term" value="F:4 iron, 4 sulfur cluster binding"/>
    <property type="evidence" value="ECO:0007669"/>
    <property type="project" value="UniProtKB-UniRule"/>
</dbReference>
<dbReference type="GO" id="GO:0061799">
    <property type="term" value="F:cyclic pyranopterin monophosphate synthase activity"/>
    <property type="evidence" value="ECO:0007669"/>
    <property type="project" value="TreeGrafter"/>
</dbReference>
<dbReference type="GO" id="GO:0061798">
    <property type="term" value="F:GTP 3',8'-cyclase activity"/>
    <property type="evidence" value="ECO:0007669"/>
    <property type="project" value="UniProtKB-UniRule"/>
</dbReference>
<dbReference type="GO" id="GO:0005525">
    <property type="term" value="F:GTP binding"/>
    <property type="evidence" value="ECO:0007669"/>
    <property type="project" value="UniProtKB-UniRule"/>
</dbReference>
<dbReference type="GO" id="GO:0046872">
    <property type="term" value="F:metal ion binding"/>
    <property type="evidence" value="ECO:0007669"/>
    <property type="project" value="UniProtKB-KW"/>
</dbReference>
<dbReference type="GO" id="GO:1904047">
    <property type="term" value="F:S-adenosyl-L-methionine binding"/>
    <property type="evidence" value="ECO:0007669"/>
    <property type="project" value="UniProtKB-UniRule"/>
</dbReference>
<dbReference type="GO" id="GO:0006777">
    <property type="term" value="P:Mo-molybdopterin cofactor biosynthetic process"/>
    <property type="evidence" value="ECO:0007669"/>
    <property type="project" value="UniProtKB-UniRule"/>
</dbReference>
<dbReference type="CDD" id="cd01335">
    <property type="entry name" value="Radical_SAM"/>
    <property type="match status" value="1"/>
</dbReference>
<dbReference type="CDD" id="cd21117">
    <property type="entry name" value="Twitch_MoaA"/>
    <property type="match status" value="1"/>
</dbReference>
<dbReference type="Gene3D" id="3.20.20.70">
    <property type="entry name" value="Aldolase class I"/>
    <property type="match status" value="1"/>
</dbReference>
<dbReference type="HAMAP" id="MF_01225_B">
    <property type="entry name" value="MoaA_B"/>
    <property type="match status" value="1"/>
</dbReference>
<dbReference type="InterPro" id="IPR013785">
    <property type="entry name" value="Aldolase_TIM"/>
</dbReference>
<dbReference type="InterPro" id="IPR006638">
    <property type="entry name" value="Elp3/MiaA/NifB-like_rSAM"/>
</dbReference>
<dbReference type="InterPro" id="IPR013483">
    <property type="entry name" value="MoaA"/>
</dbReference>
<dbReference type="InterPro" id="IPR000385">
    <property type="entry name" value="MoaA_NifB_PqqE_Fe-S-bd_CS"/>
</dbReference>
<dbReference type="InterPro" id="IPR010505">
    <property type="entry name" value="MoaA_twitch"/>
</dbReference>
<dbReference type="InterPro" id="IPR050105">
    <property type="entry name" value="MoCo_biosynth_MoaA/MoaC"/>
</dbReference>
<dbReference type="InterPro" id="IPR007197">
    <property type="entry name" value="rSAM"/>
</dbReference>
<dbReference type="NCBIfam" id="TIGR02666">
    <property type="entry name" value="moaA"/>
    <property type="match status" value="1"/>
</dbReference>
<dbReference type="PANTHER" id="PTHR22960:SF0">
    <property type="entry name" value="MOLYBDENUM COFACTOR BIOSYNTHESIS PROTEIN 1"/>
    <property type="match status" value="1"/>
</dbReference>
<dbReference type="PANTHER" id="PTHR22960">
    <property type="entry name" value="MOLYBDOPTERIN COFACTOR SYNTHESIS PROTEIN A"/>
    <property type="match status" value="1"/>
</dbReference>
<dbReference type="Pfam" id="PF06463">
    <property type="entry name" value="Mob_synth_C"/>
    <property type="match status" value="1"/>
</dbReference>
<dbReference type="Pfam" id="PF04055">
    <property type="entry name" value="Radical_SAM"/>
    <property type="match status" value="1"/>
</dbReference>
<dbReference type="SFLD" id="SFLDG01383">
    <property type="entry name" value="cyclic_pyranopterin_phosphate"/>
    <property type="match status" value="1"/>
</dbReference>
<dbReference type="SFLD" id="SFLDG01072">
    <property type="entry name" value="dehydrogenase_like"/>
    <property type="match status" value="1"/>
</dbReference>
<dbReference type="SMART" id="SM00729">
    <property type="entry name" value="Elp3"/>
    <property type="match status" value="1"/>
</dbReference>
<dbReference type="SUPFAM" id="SSF102114">
    <property type="entry name" value="Radical SAM enzymes"/>
    <property type="match status" value="1"/>
</dbReference>
<dbReference type="PROSITE" id="PS01305">
    <property type="entry name" value="MOAA_NIFB_PQQE"/>
    <property type="match status" value="1"/>
</dbReference>
<dbReference type="PROSITE" id="PS51918">
    <property type="entry name" value="RADICAL_SAM"/>
    <property type="match status" value="1"/>
</dbReference>
<sequence length="360" mass="38986">MTLTALGMPALRSRTNGIADPRVVPTTGPLVDTFGRVANDLRVSLTDRCNLRCSYCMPERGLRWLPGEQLLRPDELARLIHIAVTRLGVTSVRFTGGEPLLAHHLDEVVAATARLRPRPEISLTTNGVGLARRAGALAEAGLDRVNVSLDSIDRAHFAAITRRDRLAHVLAGLAAAKAAGLTPVKVNAVLDPTTGREDVVDLLRFCLERGYQLRVIEQMPLDAGHSWRRNIALSADDVLAALRPHFRLRPDPAPRGSAPAELWLVDAGPNTPRGRFGVIASVSHAFCSTCDRTRLTADGQIRSCLFSTEETDLRRLLRGGADDDAIEAAWRAAMWSKPAGHGINAPDFIQPDRPMSAIGG</sequence>
<keyword id="KW-0004">4Fe-4S</keyword>
<keyword id="KW-0342">GTP-binding</keyword>
<keyword id="KW-0408">Iron</keyword>
<keyword id="KW-0411">Iron-sulfur</keyword>
<keyword id="KW-0456">Lyase</keyword>
<keyword id="KW-0479">Metal-binding</keyword>
<keyword id="KW-0501">Molybdenum cofactor biosynthesis</keyword>
<keyword id="KW-0547">Nucleotide-binding</keyword>
<keyword id="KW-1185">Reference proteome</keyword>
<keyword id="KW-0949">S-adenosyl-L-methionine</keyword>
<gene>
    <name evidence="1" type="primary">moaA2</name>
    <name type="ordered locus">MT0892</name>
</gene>
<protein>
    <recommendedName>
        <fullName evidence="1">GTP 3',8-cyclase 2</fullName>
        <ecNumber evidence="1">4.1.99.22</ecNumber>
    </recommendedName>
    <alternativeName>
        <fullName evidence="1">Molybdenum cofactor biosynthesis protein A 2</fullName>
    </alternativeName>
</protein>
<evidence type="ECO:0000255" key="1">
    <source>
        <dbReference type="HAMAP-Rule" id="MF_01225"/>
    </source>
</evidence>
<evidence type="ECO:0000255" key="2">
    <source>
        <dbReference type="PROSITE-ProRule" id="PRU01266"/>
    </source>
</evidence>
<proteinExistence type="inferred from homology"/>
<accession>P9WJS0</accession>
<accession>L0T7Y9</accession>
<accession>O53881</accession>
<accession>P65384</accession>
<organism>
    <name type="scientific">Mycobacterium tuberculosis (strain CDC 1551 / Oshkosh)</name>
    <dbReference type="NCBI Taxonomy" id="83331"/>
    <lineage>
        <taxon>Bacteria</taxon>
        <taxon>Bacillati</taxon>
        <taxon>Actinomycetota</taxon>
        <taxon>Actinomycetes</taxon>
        <taxon>Mycobacteriales</taxon>
        <taxon>Mycobacteriaceae</taxon>
        <taxon>Mycobacterium</taxon>
        <taxon>Mycobacterium tuberculosis complex</taxon>
    </lineage>
</organism>
<feature type="chain" id="PRO_0000427781" description="GTP 3',8-cyclase 2">
    <location>
        <begin position="1"/>
        <end position="360"/>
    </location>
</feature>
<feature type="domain" description="Radical SAM core" evidence="2">
    <location>
        <begin position="33"/>
        <end position="259"/>
    </location>
</feature>
<feature type="binding site" evidence="1">
    <location>
        <position position="42"/>
    </location>
    <ligand>
        <name>GTP</name>
        <dbReference type="ChEBI" id="CHEBI:37565"/>
    </ligand>
</feature>
<feature type="binding site" evidence="1">
    <location>
        <position position="49"/>
    </location>
    <ligand>
        <name>[4Fe-4S] cluster</name>
        <dbReference type="ChEBI" id="CHEBI:49883"/>
        <label>1</label>
        <note>4Fe-4S-S-AdoMet</note>
    </ligand>
</feature>
<feature type="binding site" evidence="1">
    <location>
        <position position="53"/>
    </location>
    <ligand>
        <name>[4Fe-4S] cluster</name>
        <dbReference type="ChEBI" id="CHEBI:49883"/>
        <label>1</label>
        <note>4Fe-4S-S-AdoMet</note>
    </ligand>
</feature>
<feature type="binding site" evidence="1">
    <location>
        <position position="55"/>
    </location>
    <ligand>
        <name>S-adenosyl-L-methionine</name>
        <dbReference type="ChEBI" id="CHEBI:59789"/>
    </ligand>
</feature>
<feature type="binding site" evidence="1">
    <location>
        <position position="56"/>
    </location>
    <ligand>
        <name>[4Fe-4S] cluster</name>
        <dbReference type="ChEBI" id="CHEBI:49883"/>
        <label>1</label>
        <note>4Fe-4S-S-AdoMet</note>
    </ligand>
</feature>
<feature type="binding site" evidence="1">
    <location>
        <position position="93"/>
    </location>
    <ligand>
        <name>GTP</name>
        <dbReference type="ChEBI" id="CHEBI:37565"/>
    </ligand>
</feature>
<feature type="binding site" evidence="1">
    <location>
        <position position="97"/>
    </location>
    <ligand>
        <name>S-adenosyl-L-methionine</name>
        <dbReference type="ChEBI" id="CHEBI:59789"/>
    </ligand>
</feature>
<feature type="binding site" evidence="1">
    <location>
        <position position="124"/>
    </location>
    <ligand>
        <name>GTP</name>
        <dbReference type="ChEBI" id="CHEBI:37565"/>
    </ligand>
</feature>
<feature type="binding site" evidence="1">
    <location>
        <position position="148"/>
    </location>
    <ligand>
        <name>S-adenosyl-L-methionine</name>
        <dbReference type="ChEBI" id="CHEBI:59789"/>
    </ligand>
</feature>
<feature type="binding site" evidence="1">
    <location>
        <position position="185"/>
    </location>
    <ligand>
        <name>GTP</name>
        <dbReference type="ChEBI" id="CHEBI:37565"/>
    </ligand>
</feature>
<feature type="binding site" evidence="1">
    <location>
        <position position="219"/>
    </location>
    <ligand>
        <name>S-adenosyl-L-methionine</name>
        <dbReference type="ChEBI" id="CHEBI:59789"/>
    </ligand>
</feature>
<feature type="binding site" evidence="1">
    <location>
        <position position="287"/>
    </location>
    <ligand>
        <name>[4Fe-4S] cluster</name>
        <dbReference type="ChEBI" id="CHEBI:49883"/>
        <label>2</label>
        <note>4Fe-4S-substrate</note>
    </ligand>
</feature>
<feature type="binding site" evidence="1">
    <location>
        <position position="290"/>
    </location>
    <ligand>
        <name>[4Fe-4S] cluster</name>
        <dbReference type="ChEBI" id="CHEBI:49883"/>
        <label>2</label>
        <note>4Fe-4S-substrate</note>
    </ligand>
</feature>
<feature type="binding site" evidence="1">
    <location>
        <begin position="292"/>
        <end position="294"/>
    </location>
    <ligand>
        <name>GTP</name>
        <dbReference type="ChEBI" id="CHEBI:37565"/>
    </ligand>
</feature>
<feature type="binding site" evidence="1">
    <location>
        <position position="304"/>
    </location>
    <ligand>
        <name>[4Fe-4S] cluster</name>
        <dbReference type="ChEBI" id="CHEBI:49883"/>
        <label>2</label>
        <note>4Fe-4S-substrate</note>
    </ligand>
</feature>
<reference key="1">
    <citation type="journal article" date="2002" name="J. Bacteriol.">
        <title>Whole-genome comparison of Mycobacterium tuberculosis clinical and laboratory strains.</title>
        <authorList>
            <person name="Fleischmann R.D."/>
            <person name="Alland D."/>
            <person name="Eisen J.A."/>
            <person name="Carpenter L."/>
            <person name="White O."/>
            <person name="Peterson J.D."/>
            <person name="DeBoy R.T."/>
            <person name="Dodson R.J."/>
            <person name="Gwinn M.L."/>
            <person name="Haft D.H."/>
            <person name="Hickey E.K."/>
            <person name="Kolonay J.F."/>
            <person name="Nelson W.C."/>
            <person name="Umayam L.A."/>
            <person name="Ermolaeva M.D."/>
            <person name="Salzberg S.L."/>
            <person name="Delcher A."/>
            <person name="Utterback T.R."/>
            <person name="Weidman J.F."/>
            <person name="Khouri H.M."/>
            <person name="Gill J."/>
            <person name="Mikula A."/>
            <person name="Bishai W."/>
            <person name="Jacobs W.R. Jr."/>
            <person name="Venter J.C."/>
            <person name="Fraser C.M."/>
        </authorList>
    </citation>
    <scope>NUCLEOTIDE SEQUENCE [LARGE SCALE GENOMIC DNA]</scope>
    <source>
        <strain>CDC 1551 / Oshkosh</strain>
    </source>
</reference>
<name>MOAA2_MYCTO</name>
<comment type="function">
    <text evidence="1">Catalyzes the cyclization of GTP to (8S)-3',8-cyclo-7,8-dihydroguanosine 5'-triphosphate.</text>
</comment>
<comment type="catalytic activity">
    <reaction evidence="1">
        <text>GTP + AH2 + S-adenosyl-L-methionine = (8S)-3',8-cyclo-7,8-dihydroguanosine 5'-triphosphate + 5'-deoxyadenosine + L-methionine + A + H(+)</text>
        <dbReference type="Rhea" id="RHEA:49576"/>
        <dbReference type="ChEBI" id="CHEBI:13193"/>
        <dbReference type="ChEBI" id="CHEBI:15378"/>
        <dbReference type="ChEBI" id="CHEBI:17319"/>
        <dbReference type="ChEBI" id="CHEBI:17499"/>
        <dbReference type="ChEBI" id="CHEBI:37565"/>
        <dbReference type="ChEBI" id="CHEBI:57844"/>
        <dbReference type="ChEBI" id="CHEBI:59789"/>
        <dbReference type="ChEBI" id="CHEBI:131766"/>
        <dbReference type="EC" id="4.1.99.22"/>
    </reaction>
</comment>
<comment type="cofactor">
    <cofactor evidence="1">
        <name>[4Fe-4S] cluster</name>
        <dbReference type="ChEBI" id="CHEBI:49883"/>
    </cofactor>
    <text evidence="1">Binds 2 [4Fe-4S] clusters. Binds 1 [4Fe-4S] cluster coordinated with 3 cysteines and an exchangeable S-adenosyl-L-methionine and 1 [4Fe-4S] cluster coordinated with 3 cysteines and the GTP-derived substrate.</text>
</comment>
<comment type="pathway">
    <text evidence="1">Cofactor biosynthesis; molybdopterin biosynthesis.</text>
</comment>
<comment type="subunit">
    <text evidence="1">Monomer and homodimer.</text>
</comment>
<comment type="similarity">
    <text evidence="1">Belongs to the radical SAM superfamily. MoaA family.</text>
</comment>